<comment type="function">
    <text evidence="1">Condenses 4-methyl-5-(beta-hydroxyethyl)thiazole monophosphate (THZ-P) and 2-methyl-4-amino-5-hydroxymethyl pyrimidine pyrophosphate (HMP-PP) to form thiamine monophosphate (TMP).</text>
</comment>
<comment type="catalytic activity">
    <reaction evidence="1">
        <text>2-[(2R,5Z)-2-carboxy-4-methylthiazol-5(2H)-ylidene]ethyl phosphate + 4-amino-2-methyl-5-(diphosphooxymethyl)pyrimidine + 2 H(+) = thiamine phosphate + CO2 + diphosphate</text>
        <dbReference type="Rhea" id="RHEA:47844"/>
        <dbReference type="ChEBI" id="CHEBI:15378"/>
        <dbReference type="ChEBI" id="CHEBI:16526"/>
        <dbReference type="ChEBI" id="CHEBI:33019"/>
        <dbReference type="ChEBI" id="CHEBI:37575"/>
        <dbReference type="ChEBI" id="CHEBI:57841"/>
        <dbReference type="ChEBI" id="CHEBI:62899"/>
        <dbReference type="EC" id="2.5.1.3"/>
    </reaction>
</comment>
<comment type="catalytic activity">
    <reaction evidence="1">
        <text>2-(2-carboxy-4-methylthiazol-5-yl)ethyl phosphate + 4-amino-2-methyl-5-(diphosphooxymethyl)pyrimidine + 2 H(+) = thiamine phosphate + CO2 + diphosphate</text>
        <dbReference type="Rhea" id="RHEA:47848"/>
        <dbReference type="ChEBI" id="CHEBI:15378"/>
        <dbReference type="ChEBI" id="CHEBI:16526"/>
        <dbReference type="ChEBI" id="CHEBI:33019"/>
        <dbReference type="ChEBI" id="CHEBI:37575"/>
        <dbReference type="ChEBI" id="CHEBI:57841"/>
        <dbReference type="ChEBI" id="CHEBI:62890"/>
        <dbReference type="EC" id="2.5.1.3"/>
    </reaction>
</comment>
<comment type="catalytic activity">
    <reaction evidence="1">
        <text>4-methyl-5-(2-phosphooxyethyl)-thiazole + 4-amino-2-methyl-5-(diphosphooxymethyl)pyrimidine + H(+) = thiamine phosphate + diphosphate</text>
        <dbReference type="Rhea" id="RHEA:22328"/>
        <dbReference type="ChEBI" id="CHEBI:15378"/>
        <dbReference type="ChEBI" id="CHEBI:33019"/>
        <dbReference type="ChEBI" id="CHEBI:37575"/>
        <dbReference type="ChEBI" id="CHEBI:57841"/>
        <dbReference type="ChEBI" id="CHEBI:58296"/>
        <dbReference type="EC" id="2.5.1.3"/>
    </reaction>
</comment>
<comment type="cofactor">
    <cofactor evidence="1">
        <name>Mg(2+)</name>
        <dbReference type="ChEBI" id="CHEBI:18420"/>
    </cofactor>
    <text evidence="1">Binds 1 Mg(2+) ion per subunit.</text>
</comment>
<comment type="pathway">
    <text evidence="1">Cofactor biosynthesis; thiamine diphosphate biosynthesis; thiamine phosphate from 4-amino-2-methyl-5-diphosphomethylpyrimidine and 4-methyl-5-(2-phosphoethyl)-thiazole: step 1/1.</text>
</comment>
<comment type="similarity">
    <text evidence="1">Belongs to the thiamine-phosphate synthase family.</text>
</comment>
<name>THIE_CLOB8</name>
<feature type="chain" id="PRO_0000336380" description="Thiamine-phosphate synthase">
    <location>
        <begin position="1"/>
        <end position="209"/>
    </location>
</feature>
<feature type="binding site" evidence="1">
    <location>
        <begin position="39"/>
        <end position="43"/>
    </location>
    <ligand>
        <name>4-amino-2-methyl-5-(diphosphooxymethyl)pyrimidine</name>
        <dbReference type="ChEBI" id="CHEBI:57841"/>
    </ligand>
</feature>
<feature type="binding site" evidence="1">
    <location>
        <position position="71"/>
    </location>
    <ligand>
        <name>4-amino-2-methyl-5-(diphosphooxymethyl)pyrimidine</name>
        <dbReference type="ChEBI" id="CHEBI:57841"/>
    </ligand>
</feature>
<feature type="binding site" evidence="1">
    <location>
        <position position="72"/>
    </location>
    <ligand>
        <name>Mg(2+)</name>
        <dbReference type="ChEBI" id="CHEBI:18420"/>
    </ligand>
</feature>
<feature type="binding site" evidence="1">
    <location>
        <position position="91"/>
    </location>
    <ligand>
        <name>Mg(2+)</name>
        <dbReference type="ChEBI" id="CHEBI:18420"/>
    </ligand>
</feature>
<feature type="binding site" evidence="1">
    <location>
        <position position="110"/>
    </location>
    <ligand>
        <name>4-amino-2-methyl-5-(diphosphooxymethyl)pyrimidine</name>
        <dbReference type="ChEBI" id="CHEBI:57841"/>
    </ligand>
</feature>
<feature type="binding site" evidence="1">
    <location>
        <begin position="136"/>
        <end position="138"/>
    </location>
    <ligand>
        <name>2-[(2R,5Z)-2-carboxy-4-methylthiazol-5(2H)-ylidene]ethyl phosphate</name>
        <dbReference type="ChEBI" id="CHEBI:62899"/>
    </ligand>
</feature>
<feature type="binding site" evidence="1">
    <location>
        <position position="139"/>
    </location>
    <ligand>
        <name>4-amino-2-methyl-5-(diphosphooxymethyl)pyrimidine</name>
        <dbReference type="ChEBI" id="CHEBI:57841"/>
    </ligand>
</feature>
<feature type="binding site" evidence="1">
    <location>
        <position position="166"/>
    </location>
    <ligand>
        <name>2-[(2R,5Z)-2-carboxy-4-methylthiazol-5(2H)-ylidene]ethyl phosphate</name>
        <dbReference type="ChEBI" id="CHEBI:62899"/>
    </ligand>
</feature>
<feature type="binding site" evidence="1">
    <location>
        <begin position="186"/>
        <end position="187"/>
    </location>
    <ligand>
        <name>2-[(2R,5Z)-2-carboxy-4-methylthiazol-5(2H)-ylidene]ethyl phosphate</name>
        <dbReference type="ChEBI" id="CHEBI:62899"/>
    </ligand>
</feature>
<accession>A6M1W6</accession>
<keyword id="KW-0460">Magnesium</keyword>
<keyword id="KW-0479">Metal-binding</keyword>
<keyword id="KW-0784">Thiamine biosynthesis</keyword>
<keyword id="KW-0808">Transferase</keyword>
<evidence type="ECO:0000255" key="1">
    <source>
        <dbReference type="HAMAP-Rule" id="MF_00097"/>
    </source>
</evidence>
<gene>
    <name evidence="1" type="primary">thiE</name>
    <name type="ordered locus">Cbei_4487</name>
</gene>
<proteinExistence type="inferred from homology"/>
<dbReference type="EC" id="2.5.1.3" evidence="1"/>
<dbReference type="EMBL" id="CP000721">
    <property type="protein sequence ID" value="ABR36596.1"/>
    <property type="molecule type" value="Genomic_DNA"/>
</dbReference>
<dbReference type="RefSeq" id="WP_012060643.1">
    <property type="nucleotide sequence ID" value="NC_009617.1"/>
</dbReference>
<dbReference type="SMR" id="A6M1W6"/>
<dbReference type="KEGG" id="cbe:Cbei_4487"/>
<dbReference type="eggNOG" id="COG0352">
    <property type="taxonomic scope" value="Bacteria"/>
</dbReference>
<dbReference type="HOGENOM" id="CLU_018272_3_2_9"/>
<dbReference type="UniPathway" id="UPA00060">
    <property type="reaction ID" value="UER00141"/>
</dbReference>
<dbReference type="Proteomes" id="UP000000565">
    <property type="component" value="Chromosome"/>
</dbReference>
<dbReference type="GO" id="GO:0005737">
    <property type="term" value="C:cytoplasm"/>
    <property type="evidence" value="ECO:0007669"/>
    <property type="project" value="TreeGrafter"/>
</dbReference>
<dbReference type="GO" id="GO:0000287">
    <property type="term" value="F:magnesium ion binding"/>
    <property type="evidence" value="ECO:0007669"/>
    <property type="project" value="UniProtKB-UniRule"/>
</dbReference>
<dbReference type="GO" id="GO:0004789">
    <property type="term" value="F:thiamine-phosphate diphosphorylase activity"/>
    <property type="evidence" value="ECO:0007669"/>
    <property type="project" value="UniProtKB-UniRule"/>
</dbReference>
<dbReference type="GO" id="GO:0009228">
    <property type="term" value="P:thiamine biosynthetic process"/>
    <property type="evidence" value="ECO:0007669"/>
    <property type="project" value="UniProtKB-KW"/>
</dbReference>
<dbReference type="GO" id="GO:0009229">
    <property type="term" value="P:thiamine diphosphate biosynthetic process"/>
    <property type="evidence" value="ECO:0007669"/>
    <property type="project" value="UniProtKB-UniRule"/>
</dbReference>
<dbReference type="CDD" id="cd00564">
    <property type="entry name" value="TMP_TenI"/>
    <property type="match status" value="1"/>
</dbReference>
<dbReference type="FunFam" id="3.20.20.70:FF:000096">
    <property type="entry name" value="Thiamine-phosphate synthase"/>
    <property type="match status" value="1"/>
</dbReference>
<dbReference type="Gene3D" id="3.20.20.70">
    <property type="entry name" value="Aldolase class I"/>
    <property type="match status" value="1"/>
</dbReference>
<dbReference type="HAMAP" id="MF_00097">
    <property type="entry name" value="TMP_synthase"/>
    <property type="match status" value="1"/>
</dbReference>
<dbReference type="InterPro" id="IPR013785">
    <property type="entry name" value="Aldolase_TIM"/>
</dbReference>
<dbReference type="InterPro" id="IPR036206">
    <property type="entry name" value="ThiamineP_synth_sf"/>
</dbReference>
<dbReference type="InterPro" id="IPR022998">
    <property type="entry name" value="ThiamineP_synth_TenI"/>
</dbReference>
<dbReference type="InterPro" id="IPR034291">
    <property type="entry name" value="TMP_synthase"/>
</dbReference>
<dbReference type="NCBIfam" id="TIGR00693">
    <property type="entry name" value="thiE"/>
    <property type="match status" value="1"/>
</dbReference>
<dbReference type="PANTHER" id="PTHR20857:SF23">
    <property type="entry name" value="THIAMINE BIOSYNTHETIC BIFUNCTIONAL ENZYME"/>
    <property type="match status" value="1"/>
</dbReference>
<dbReference type="PANTHER" id="PTHR20857">
    <property type="entry name" value="THIAMINE-PHOSPHATE PYROPHOSPHORYLASE"/>
    <property type="match status" value="1"/>
</dbReference>
<dbReference type="Pfam" id="PF02581">
    <property type="entry name" value="TMP-TENI"/>
    <property type="match status" value="1"/>
</dbReference>
<dbReference type="SUPFAM" id="SSF51391">
    <property type="entry name" value="Thiamin phosphate synthase"/>
    <property type="match status" value="1"/>
</dbReference>
<organism>
    <name type="scientific">Clostridium beijerinckii (strain ATCC 51743 / NCIMB 8052)</name>
    <name type="common">Clostridium acetobutylicum</name>
    <dbReference type="NCBI Taxonomy" id="290402"/>
    <lineage>
        <taxon>Bacteria</taxon>
        <taxon>Bacillati</taxon>
        <taxon>Bacillota</taxon>
        <taxon>Clostridia</taxon>
        <taxon>Eubacteriales</taxon>
        <taxon>Clostridiaceae</taxon>
        <taxon>Clostridium</taxon>
    </lineage>
</organism>
<protein>
    <recommendedName>
        <fullName evidence="1">Thiamine-phosphate synthase</fullName>
        <shortName evidence="1">TP synthase</shortName>
        <shortName evidence="1">TPS</shortName>
        <ecNumber evidence="1">2.5.1.3</ecNumber>
    </recommendedName>
    <alternativeName>
        <fullName evidence="1">Thiamine-phosphate pyrophosphorylase</fullName>
        <shortName evidence="1">TMP pyrophosphorylase</shortName>
        <shortName evidence="1">TMP-PPase</shortName>
    </alternativeName>
</protein>
<sequence length="209" mass="22576">MKPKIDYSIYLVTDRDLMSTETLEEAVEKAIIGGCTLIQLREKDCSSLDFYNTAVRVKEITDKHNIPLIINDRVDIALAVDAAGVHVGQSDIPAAIVRKVIGNDKILGVSTGSVNEALEAEKNGADYLGVGAMYSTGTKKDADSTSMNELRKIRENVSIPIVVIGGINKDRVKDFKGIGIDGLAIVSAIIAKEDITTAAKELKNEFIKI</sequence>
<reference key="1">
    <citation type="submission" date="2007-06" db="EMBL/GenBank/DDBJ databases">
        <title>Complete sequence of Clostridium beijerinckii NCIMB 8052.</title>
        <authorList>
            <consortium name="US DOE Joint Genome Institute"/>
            <person name="Copeland A."/>
            <person name="Lucas S."/>
            <person name="Lapidus A."/>
            <person name="Barry K."/>
            <person name="Detter J.C."/>
            <person name="Glavina del Rio T."/>
            <person name="Hammon N."/>
            <person name="Israni S."/>
            <person name="Dalin E."/>
            <person name="Tice H."/>
            <person name="Pitluck S."/>
            <person name="Sims D."/>
            <person name="Brettin T."/>
            <person name="Bruce D."/>
            <person name="Tapia R."/>
            <person name="Brainard J."/>
            <person name="Schmutz J."/>
            <person name="Larimer F."/>
            <person name="Land M."/>
            <person name="Hauser L."/>
            <person name="Kyrpides N."/>
            <person name="Mikhailova N."/>
            <person name="Bennet G."/>
            <person name="Cann I."/>
            <person name="Chen J.-S."/>
            <person name="Contreras A.L."/>
            <person name="Jones D."/>
            <person name="Kashket E."/>
            <person name="Mitchell W."/>
            <person name="Stoddard S."/>
            <person name="Schwarz W."/>
            <person name="Qureshi N."/>
            <person name="Young M."/>
            <person name="Shi Z."/>
            <person name="Ezeji T."/>
            <person name="White B."/>
            <person name="Blaschek H."/>
            <person name="Richardson P."/>
        </authorList>
    </citation>
    <scope>NUCLEOTIDE SEQUENCE [LARGE SCALE GENOMIC DNA]</scope>
    <source>
        <strain>ATCC 51743 / NCIMB 8052</strain>
    </source>
</reference>